<gene>
    <name evidence="1" type="primary">pqqA</name>
    <name type="ordered locus">Dshi_0450</name>
</gene>
<evidence type="ECO:0000255" key="1">
    <source>
        <dbReference type="HAMAP-Rule" id="MF_00656"/>
    </source>
</evidence>
<keyword id="KW-0884">PQQ biosynthesis</keyword>
<keyword id="KW-1185">Reference proteome</keyword>
<comment type="function">
    <text evidence="1">Required for coenzyme pyrroloquinoline quinone (PQQ) biosynthesis. PQQ is probably formed by cross-linking a specific glutamate to a specific tyrosine residue and excising these residues from the peptide.</text>
</comment>
<comment type="pathway">
    <text evidence="1">Cofactor biosynthesis; pyrroloquinoline quinone biosynthesis.</text>
</comment>
<comment type="similarity">
    <text evidence="1">Belongs to the PqqA family.</text>
</comment>
<feature type="chain" id="PRO_1000082786" description="Coenzyme PQQ synthesis protein A">
    <location>
        <begin position="1"/>
        <end position="32"/>
    </location>
</feature>
<feature type="cross-link" description="Pyrroloquinoline quinone (Glu-Tyr)" evidence="1">
    <location>
        <begin position="16"/>
        <end position="20"/>
    </location>
</feature>
<dbReference type="EMBL" id="CP000830">
    <property type="protein sequence ID" value="ABV92198.1"/>
    <property type="molecule type" value="Genomic_DNA"/>
</dbReference>
<dbReference type="RefSeq" id="WP_012177128.1">
    <property type="nucleotide sequence ID" value="NC_009952.1"/>
</dbReference>
<dbReference type="STRING" id="398580.Dshi_0450"/>
<dbReference type="KEGG" id="dsh:Dshi_0450"/>
<dbReference type="eggNOG" id="ENOG5033GD0">
    <property type="taxonomic scope" value="Bacteria"/>
</dbReference>
<dbReference type="HOGENOM" id="CLU_219399_1_0_5"/>
<dbReference type="OrthoDB" id="8163745at2"/>
<dbReference type="UniPathway" id="UPA00539"/>
<dbReference type="Proteomes" id="UP000006833">
    <property type="component" value="Chromosome"/>
</dbReference>
<dbReference type="GO" id="GO:0018189">
    <property type="term" value="P:pyrroloquinoline quinone biosynthetic process"/>
    <property type="evidence" value="ECO:0007669"/>
    <property type="project" value="UniProtKB-UniRule"/>
</dbReference>
<dbReference type="HAMAP" id="MF_00656">
    <property type="entry name" value="PQQ_syn_PqqA"/>
    <property type="match status" value="1"/>
</dbReference>
<dbReference type="InterPro" id="IPR011725">
    <property type="entry name" value="PQQ_synth_PqqA"/>
</dbReference>
<dbReference type="NCBIfam" id="TIGR02107">
    <property type="entry name" value="PQQ_syn_pqqA"/>
    <property type="match status" value="1"/>
</dbReference>
<dbReference type="Pfam" id="PF08042">
    <property type="entry name" value="PqqA"/>
    <property type="match status" value="1"/>
</dbReference>
<organism>
    <name type="scientific">Dinoroseobacter shibae (strain DSM 16493 / NCIMB 14021 / DFL 12)</name>
    <dbReference type="NCBI Taxonomy" id="398580"/>
    <lineage>
        <taxon>Bacteria</taxon>
        <taxon>Pseudomonadati</taxon>
        <taxon>Pseudomonadota</taxon>
        <taxon>Alphaproteobacteria</taxon>
        <taxon>Rhodobacterales</taxon>
        <taxon>Roseobacteraceae</taxon>
        <taxon>Dinoroseobacter</taxon>
    </lineage>
</organism>
<name>PQQA_DINSH</name>
<accession>A8LN54</accession>
<sequence>MAWTKPIIREIECGMEINMYGPDSDEEREVLF</sequence>
<proteinExistence type="inferred from homology"/>
<protein>
    <recommendedName>
        <fullName evidence="1">Coenzyme PQQ synthesis protein A</fullName>
    </recommendedName>
    <alternativeName>
        <fullName evidence="1">Pyrroloquinoline quinone biosynthesis protein A</fullName>
    </alternativeName>
</protein>
<reference key="1">
    <citation type="journal article" date="2010" name="ISME J.">
        <title>The complete genome sequence of the algal symbiont Dinoroseobacter shibae: a hitchhiker's guide to life in the sea.</title>
        <authorList>
            <person name="Wagner-Dobler I."/>
            <person name="Ballhausen B."/>
            <person name="Berger M."/>
            <person name="Brinkhoff T."/>
            <person name="Buchholz I."/>
            <person name="Bunk B."/>
            <person name="Cypionka H."/>
            <person name="Daniel R."/>
            <person name="Drepper T."/>
            <person name="Gerdts G."/>
            <person name="Hahnke S."/>
            <person name="Han C."/>
            <person name="Jahn D."/>
            <person name="Kalhoefer D."/>
            <person name="Kiss H."/>
            <person name="Klenk H.P."/>
            <person name="Kyrpides N."/>
            <person name="Liebl W."/>
            <person name="Liesegang H."/>
            <person name="Meincke L."/>
            <person name="Pati A."/>
            <person name="Petersen J."/>
            <person name="Piekarski T."/>
            <person name="Pommerenke C."/>
            <person name="Pradella S."/>
            <person name="Pukall R."/>
            <person name="Rabus R."/>
            <person name="Stackebrandt E."/>
            <person name="Thole S."/>
            <person name="Thompson L."/>
            <person name="Tielen P."/>
            <person name="Tomasch J."/>
            <person name="von Jan M."/>
            <person name="Wanphrut N."/>
            <person name="Wichels A."/>
            <person name="Zech H."/>
            <person name="Simon M."/>
        </authorList>
    </citation>
    <scope>NUCLEOTIDE SEQUENCE [LARGE SCALE GENOMIC DNA]</scope>
    <source>
        <strain>DSM 16493 / NCIMB 14021 / DFL 12</strain>
    </source>
</reference>